<feature type="chain" id="PRO_0000444351" description="FAD-dependent monooxygenase ltmM">
    <location>
        <begin position="1"/>
        <end position="472"/>
    </location>
</feature>
<feature type="transmembrane region" description="Helical" evidence="2">
    <location>
        <begin position="7"/>
        <end position="27"/>
    </location>
</feature>
<feature type="transmembrane region" description="Helical" evidence="2">
    <location>
        <begin position="450"/>
        <end position="470"/>
    </location>
</feature>
<feature type="binding site" evidence="1">
    <location>
        <position position="34"/>
    </location>
    <ligand>
        <name>FAD</name>
        <dbReference type="ChEBI" id="CHEBI:57692"/>
    </ligand>
</feature>
<feature type="binding site" evidence="1">
    <location>
        <position position="48"/>
    </location>
    <ligand>
        <name>FAD</name>
        <dbReference type="ChEBI" id="CHEBI:57692"/>
    </ligand>
</feature>
<feature type="binding site" evidence="1">
    <location>
        <position position="107"/>
    </location>
    <ligand>
        <name>FAD</name>
        <dbReference type="ChEBI" id="CHEBI:57692"/>
    </ligand>
</feature>
<feature type="binding site" evidence="1">
    <location>
        <position position="306"/>
    </location>
    <ligand>
        <name>FAD</name>
        <dbReference type="ChEBI" id="CHEBI:57692"/>
    </ligand>
</feature>
<feature type="binding site" evidence="1">
    <location>
        <position position="319"/>
    </location>
    <ligand>
        <name>FAD</name>
        <dbReference type="ChEBI" id="CHEBI:57692"/>
    </ligand>
</feature>
<feature type="glycosylation site" description="N-linked (GlcNAc...) asparagine" evidence="3">
    <location>
        <position position="186"/>
    </location>
</feature>
<evidence type="ECO:0000250" key="1">
    <source>
        <dbReference type="UniProtKB" id="B8M9J8"/>
    </source>
</evidence>
<evidence type="ECO:0000255" key="2"/>
<evidence type="ECO:0000255" key="3">
    <source>
        <dbReference type="PROSITE-ProRule" id="PRU00498"/>
    </source>
</evidence>
<evidence type="ECO:0000269" key="4">
    <source>
    </source>
</evidence>
<evidence type="ECO:0000269" key="5">
    <source>
    </source>
</evidence>
<evidence type="ECO:0000269" key="6">
    <source>
    </source>
</evidence>
<evidence type="ECO:0000269" key="7">
    <source>
    </source>
</evidence>
<evidence type="ECO:0000303" key="8">
    <source>
    </source>
</evidence>
<evidence type="ECO:0000305" key="9"/>
<evidence type="ECO:0000305" key="10">
    <source>
    </source>
</evidence>
<reference key="1">
    <citation type="journal article" date="2005" name="Mol. Genet. Genomics">
        <title>Molecular cloning and genetic analysis of a symbiosis-expressed gene cluster for lolitrem biosynthesis from a mutualistic endophyte of perennial ryegrass.</title>
        <authorList>
            <person name="Young C.A."/>
            <person name="Bryant M.K."/>
            <person name="Christensen M.J."/>
            <person name="Tapper B.A."/>
            <person name="Bryan G.T."/>
            <person name="Scott B."/>
        </authorList>
    </citation>
    <scope>NUCLEOTIDE SEQUENCE [GENOMIC DNA]</scope>
    <source>
        <strain>Fl1</strain>
    </source>
</reference>
<reference key="2">
    <citation type="submission" date="2011-08" db="EMBL/GenBank/DDBJ databases">
        <title>Epichloe festucae IDT gene cluster.</title>
        <authorList>
            <person name="Young C.A."/>
            <person name="Schardl C.L."/>
        </authorList>
    </citation>
    <scope>NUCLEOTIDE SEQUENCE [GENOMIC DNA]</scope>
    <source>
        <strain>E894</strain>
    </source>
</reference>
<reference key="3">
    <citation type="journal article" date="2006" name="Fungal Genet. Biol.">
        <title>A complex gene cluster for indole-diterpene biosynthesis in the grass endophyte Neotyphodium lolii.</title>
        <authorList>
            <person name="Young C.A."/>
            <person name="Felitti S."/>
            <person name="Shields K."/>
            <person name="Spangenberg G."/>
            <person name="Johnson R.D."/>
            <person name="Bryan G.T."/>
            <person name="Saikia S."/>
            <person name="Scott B."/>
        </authorList>
    </citation>
    <scope>FUNCTION</scope>
</reference>
<reference key="4">
    <citation type="journal article" date="2010" name="Plant Physiol.">
        <title>Disruption of signaling in a fungal-grass symbiosis leads to pathogenesis.</title>
        <authorList>
            <person name="Eaton C.J."/>
            <person name="Cox M.P."/>
            <person name="Ambrose B."/>
            <person name="Becker M."/>
            <person name="Hesse U."/>
            <person name="Schardl C.L."/>
            <person name="Scott B."/>
        </authorList>
    </citation>
    <scope>INDUCTION</scope>
</reference>
<reference key="5">
    <citation type="journal article" date="2012" name="FEBS Lett.">
        <title>Functional analysis of an indole-diterpene gene cluster for lolitrem B biosynthesis in the grass endosymbiont Epichloe festucae.</title>
        <authorList>
            <person name="Saikia S."/>
            <person name="Takemoto D."/>
            <person name="Tapper B.A."/>
            <person name="Lane G.A."/>
            <person name="Fraser K."/>
            <person name="Scott B."/>
        </authorList>
    </citation>
    <scope>FUNCTION</scope>
</reference>
<accession>Q56RZ2</accession>
<dbReference type="EC" id="1.-.-.-" evidence="10"/>
<dbReference type="EMBL" id="AY742905">
    <property type="protein sequence ID" value="AAW88515.1"/>
    <property type="molecule type" value="Genomic_DNA"/>
</dbReference>
<dbReference type="EMBL" id="JN613320">
    <property type="protein sequence ID" value="AFO85413.1"/>
    <property type="molecule type" value="Genomic_DNA"/>
</dbReference>
<dbReference type="SMR" id="Q56RZ2"/>
<dbReference type="GlyCosmos" id="Q56RZ2">
    <property type="glycosylation" value="1 site, No reported glycans"/>
</dbReference>
<dbReference type="OrthoDB" id="2431938at2759"/>
<dbReference type="GO" id="GO:0016020">
    <property type="term" value="C:membrane"/>
    <property type="evidence" value="ECO:0007669"/>
    <property type="project" value="UniProtKB-SubCell"/>
</dbReference>
<dbReference type="GO" id="GO:0071949">
    <property type="term" value="F:FAD binding"/>
    <property type="evidence" value="ECO:0007669"/>
    <property type="project" value="InterPro"/>
</dbReference>
<dbReference type="GO" id="GO:0004497">
    <property type="term" value="F:monooxygenase activity"/>
    <property type="evidence" value="ECO:0007669"/>
    <property type="project" value="UniProtKB-KW"/>
</dbReference>
<dbReference type="Gene3D" id="3.50.50.60">
    <property type="entry name" value="FAD/NAD(P)-binding domain"/>
    <property type="match status" value="1"/>
</dbReference>
<dbReference type="InterPro" id="IPR002938">
    <property type="entry name" value="FAD-bd"/>
</dbReference>
<dbReference type="InterPro" id="IPR036188">
    <property type="entry name" value="FAD/NAD-bd_sf"/>
</dbReference>
<dbReference type="InterPro" id="IPR050562">
    <property type="entry name" value="FAD_mOase_fung"/>
</dbReference>
<dbReference type="PANTHER" id="PTHR47356:SF2">
    <property type="entry name" value="FAD-BINDING DOMAIN-CONTAINING PROTEIN-RELATED"/>
    <property type="match status" value="1"/>
</dbReference>
<dbReference type="PANTHER" id="PTHR47356">
    <property type="entry name" value="FAD-DEPENDENT MONOOXYGENASE ASQG-RELATED"/>
    <property type="match status" value="1"/>
</dbReference>
<dbReference type="Pfam" id="PF01494">
    <property type="entry name" value="FAD_binding_3"/>
    <property type="match status" value="1"/>
</dbReference>
<dbReference type="PRINTS" id="PR00420">
    <property type="entry name" value="RNGMNOXGNASE"/>
</dbReference>
<dbReference type="SUPFAM" id="SSF51905">
    <property type="entry name" value="FAD/NAD(P)-binding domain"/>
    <property type="match status" value="1"/>
</dbReference>
<organism>
    <name type="scientific">Epichloe festucae (strain Fl1)</name>
    <dbReference type="NCBI Taxonomy" id="877507"/>
    <lineage>
        <taxon>Eukaryota</taxon>
        <taxon>Fungi</taxon>
        <taxon>Dikarya</taxon>
        <taxon>Ascomycota</taxon>
        <taxon>Pezizomycotina</taxon>
        <taxon>Sordariomycetes</taxon>
        <taxon>Hypocreomycetidae</taxon>
        <taxon>Hypocreales</taxon>
        <taxon>Clavicipitaceae</taxon>
        <taxon>Epichloe</taxon>
    </lineage>
</organism>
<sequence>MTSDFKVIIVGGSVAGLSLAHCLEKIGVSFVVLEKGNQIAPQLGASIGILPNGGRILDQLGIFHSIEDEIEPLESAMMRYPDGFSFKSQYPQALHTSFGYPVAFLERQRFLQILYDKLKSKDCVFTNKRVVSIASGQDKVTAKTSDGAKYLADIVIGADGVHSIVRSEIWRHLKENSQISVLEAPNASIKHDYSCIYGISLNVPQIILGIQLNCLDDGVSIHLFTGKQSKLFWFVIIKTPQASFAKVEIDNTHTARCICEGLRTKKVSDTLCFEDVWSRCTIFKMTPLEEGVFKHWNYGRLACIGDAIRKMAPNNGQGANMAIEDACSLANILQKKISHGSIRDQDINSMFQEFSMAQRARTESVCAQSEFLVRMHANQGIGRRLLGRYLIPFLYDAPAGLSGFSISGATRIEFIDLPTRSLRGAWGKSWRGSWEFILQSLVYLRPKFRIVYALYLVAAAAFILYCLSSLFP</sequence>
<name>LTMM_EPIFF</name>
<gene>
    <name type="primary">ltmM</name>
</gene>
<proteinExistence type="evidence at transcript level"/>
<keyword id="KW-0274">FAD</keyword>
<keyword id="KW-0285">Flavoprotein</keyword>
<keyword id="KW-0325">Glycoprotein</keyword>
<keyword id="KW-0472">Membrane</keyword>
<keyword id="KW-0503">Monooxygenase</keyword>
<keyword id="KW-0560">Oxidoreductase</keyword>
<keyword id="KW-0812">Transmembrane</keyword>
<keyword id="KW-1133">Transmembrane helix</keyword>
<comment type="function">
    <text evidence="4 5 7">FAD-dependent monooxygenase; part of the gene cluster that mediates the biosynthesis of lolitrems, indole-diterpene mycotoxins that are potent tremorgens in mammals, and are synthesized by clavicipitaceous fungal endophytes in association with their grass hosts (PubMed:16765617). The geranylgeranyl diphosphate (GGPP) synthase ltmG is proposed to catalyze the first step in lolitrem biosynthesis (PubMed:15991026, PubMed:16765617). LtmG catalyzes a series of iterative condensations of isopentenyl diphosphate (IPP) with dimethylallyl diphosphate (DMAPP), geranyl diphosphate (GPP), and farnesyl diphosphate (FPP), to form GGPP (PubMed:15991026, PubMed:16765617). GGPP then condenses with indole-3-glycerol phosphate to form 3-geranylgeranylindole, an acyclic intermediate, to be incorporated into paxilline (PubMed:16765617). Either ltmG or ltmC could be responsible for this step, as both are putative prenyl transferases (PubMed:16765617). The FAD-dependent monooxygenase ltmM then catalyzes the epoxidation of the two terminal alkenes of the geranylgeranyl moiety, which is subsequently cyclized by ltmC, to paspaline (PubMed:15991026, PubMed:16765617). The cytochrome P450 monooxygenases ltmQ and ltmP can sequentially oxidize paspaline to terpendole E and terpendole F (PubMed:22750140). Alternatively, ltmP converts paspaline to an intermediate which is oxidized by ltmQ to terpendole F (PubMed:22750140). LtmF, ltmK, ltmE and ltmJ appear to be unique to the epichloe endophytes (PubMed:15991026, PubMed:16765617). The prenyltransferase ltmF is involved in the 27-hydroxyl-O-prenylation (PubMed:22750140). The cytochrome P450 monooxygenase ltmK is required for the oxidative acetal ring formation (PubMed:22750140). The multi-functional prenyltransferase ltmE is required for C20- and C21-prenylations of the indole ring of paspalanes and acts together with the cytochrome P450 monooxygenase ltmJ to yield lolitremanes by multiple oxidations and ring closures (PubMed:22750140). The stereoisomer pairs of lolitriol and lolitrem N or lolitrem B and lolitrem F may be attributed to variations in the way in which ring closure can occur under the action of ltmJ (PubMed:22750140). While the major product of this pathway is lolitrem B, the prenyl transferases and cytochrome P450 monooxygenases identified in this pathway have a remarkable versatility in their regio- and stereo-specificities to generate a diverse range of metabolites that are products of a metabolic grid rather than a linear pathway (PubMed:22750140).</text>
</comment>
<comment type="cofactor">
    <cofactor evidence="9">
        <name>FAD</name>
        <dbReference type="ChEBI" id="CHEBI:57692"/>
    </cofactor>
</comment>
<comment type="pathway">
    <text evidence="10">Secondary metabolite biosynthesis.</text>
</comment>
<comment type="subcellular location">
    <subcellularLocation>
        <location evidence="2">Membrane</location>
        <topology evidence="2">Multi-pass membrane protein</topology>
    </subcellularLocation>
</comment>
<comment type="induction">
    <text evidence="6">Expression is down-regulated when the stress-activated mitogen-activated protein kinase (sakA) is deleted (PubMed:20519633).</text>
</comment>
<comment type="similarity">
    <text evidence="9">Belongs to the paxM FAD-dependent monooxygenase family.</text>
</comment>
<protein>
    <recommendedName>
        <fullName evidence="8">FAD-dependent monooxygenase ltmM</fullName>
        <ecNumber evidence="10">1.-.-.-</ecNumber>
    </recommendedName>
    <alternativeName>
        <fullName evidence="8">Lolitrem B biosynthesis cluster 1 protein M</fullName>
    </alternativeName>
</protein>